<dbReference type="EMBL" id="AC009360">
    <property type="protein sequence ID" value="AAF06042.1"/>
    <property type="molecule type" value="Genomic_DNA"/>
</dbReference>
<dbReference type="EMBL" id="CP002684">
    <property type="protein sequence ID" value="AEE34327.1"/>
    <property type="molecule type" value="Genomic_DNA"/>
</dbReference>
<dbReference type="EMBL" id="AY140011">
    <property type="protein sequence ID" value="AAM98153.1"/>
    <property type="status" value="ALT_INIT"/>
    <property type="molecule type" value="mRNA"/>
</dbReference>
<dbReference type="PIR" id="F96674">
    <property type="entry name" value="F96674"/>
</dbReference>
<dbReference type="RefSeq" id="NP_176688.3">
    <property type="nucleotide sequence ID" value="NM_105182.5"/>
</dbReference>
<dbReference type="SMR" id="Q8L718"/>
<dbReference type="FunCoup" id="Q8L718">
    <property type="interactions" value="134"/>
</dbReference>
<dbReference type="STRING" id="3702.Q8L718"/>
<dbReference type="GlyGen" id="Q8L718">
    <property type="glycosylation" value="1 site"/>
</dbReference>
<dbReference type="PaxDb" id="3702-AT1G65080.1"/>
<dbReference type="ProteomicsDB" id="245012"/>
<dbReference type="EnsemblPlants" id="AT1G65080.1">
    <property type="protein sequence ID" value="AT1G65080.1"/>
    <property type="gene ID" value="AT1G65080"/>
</dbReference>
<dbReference type="GeneID" id="842816"/>
<dbReference type="Gramene" id="AT1G65080.1">
    <property type="protein sequence ID" value="AT1G65080.1"/>
    <property type="gene ID" value="AT1G65080"/>
</dbReference>
<dbReference type="KEGG" id="ath:AT1G65080"/>
<dbReference type="Araport" id="AT1G65080"/>
<dbReference type="TAIR" id="AT1G65080">
    <property type="gene designation" value="OXA2A"/>
</dbReference>
<dbReference type="eggNOG" id="KOG1239">
    <property type="taxonomic scope" value="Eukaryota"/>
</dbReference>
<dbReference type="HOGENOM" id="CLU_032608_1_0_1"/>
<dbReference type="InParanoid" id="Q8L718"/>
<dbReference type="OMA" id="FPEATVC"/>
<dbReference type="PhylomeDB" id="Q8L718"/>
<dbReference type="PRO" id="PR:Q8L718"/>
<dbReference type="Proteomes" id="UP000006548">
    <property type="component" value="Chromosome 1"/>
</dbReference>
<dbReference type="ExpressionAtlas" id="Q8L718">
    <property type="expression patterns" value="baseline and differential"/>
</dbReference>
<dbReference type="GO" id="GO:0009535">
    <property type="term" value="C:chloroplast thylakoid membrane"/>
    <property type="evidence" value="ECO:0007669"/>
    <property type="project" value="UniProtKB-SubCell"/>
</dbReference>
<dbReference type="GO" id="GO:0005739">
    <property type="term" value="C:mitochondrion"/>
    <property type="evidence" value="ECO:0007669"/>
    <property type="project" value="GOC"/>
</dbReference>
<dbReference type="GO" id="GO:0032977">
    <property type="term" value="F:membrane insertase activity"/>
    <property type="evidence" value="ECO:0007669"/>
    <property type="project" value="InterPro"/>
</dbReference>
<dbReference type="GO" id="GO:0033617">
    <property type="term" value="P:mitochondrial cytochrome c oxidase assembly"/>
    <property type="evidence" value="ECO:0000315"/>
    <property type="project" value="TAIR"/>
</dbReference>
<dbReference type="CDD" id="cd20069">
    <property type="entry name" value="5TM_Oxa1-like"/>
    <property type="match status" value="1"/>
</dbReference>
<dbReference type="FunFam" id="1.25.40.10:FF:000816">
    <property type="entry name" value="ALBINO3-like protein 2, chloroplastic"/>
    <property type="match status" value="1"/>
</dbReference>
<dbReference type="Gene3D" id="1.25.40.10">
    <property type="entry name" value="Tetratricopeptide repeat domain"/>
    <property type="match status" value="1"/>
</dbReference>
<dbReference type="InterPro" id="IPR011990">
    <property type="entry name" value="TPR-like_helical_dom_sf"/>
</dbReference>
<dbReference type="InterPro" id="IPR001708">
    <property type="entry name" value="YidC/ALB3/OXA1/COX18"/>
</dbReference>
<dbReference type="PANTHER" id="PTHR12428:SF61">
    <property type="entry name" value="ALBINO3-LIKE PROTEIN 2, CHLOROPLASTIC"/>
    <property type="match status" value="1"/>
</dbReference>
<dbReference type="PANTHER" id="PTHR12428">
    <property type="entry name" value="OXA1"/>
    <property type="match status" value="1"/>
</dbReference>
<dbReference type="SUPFAM" id="SSF48452">
    <property type="entry name" value="TPR-like"/>
    <property type="match status" value="1"/>
</dbReference>
<dbReference type="PROSITE" id="PS50293">
    <property type="entry name" value="TPR_REGION"/>
    <property type="match status" value="2"/>
</dbReference>
<accession>Q8L718</accession>
<accession>Q9SS52</accession>
<comment type="function">
    <text evidence="1">Probably required for the insertion of integral membrane proteins into the chloroplast thylakoid membranes.</text>
</comment>
<comment type="subcellular location">
    <subcellularLocation>
        <location evidence="3">Plastid</location>
        <location evidence="3">Chloroplast thylakoid membrane</location>
        <topology evidence="3">Multi-pass membrane protein</topology>
    </subcellularLocation>
</comment>
<comment type="similarity">
    <text evidence="3">Belongs to the OXA1/ALB3/YidC (TC 2.A.9.2) family.</text>
</comment>
<comment type="sequence caution" evidence="3">
    <conflict type="erroneous initiation">
        <sequence resource="EMBL-CDS" id="AAM98153"/>
    </conflict>
</comment>
<gene>
    <name type="primary">ALB3L2</name>
    <name type="ordered locus">At1g65080</name>
    <name type="ORF">F16G16.8</name>
</gene>
<protein>
    <recommendedName>
        <fullName>ALBINO3-like protein 2, chloroplastic</fullName>
        <shortName>Ath5</shortName>
    </recommendedName>
</protein>
<name>ALB32_ARATH</name>
<proteinExistence type="evidence at transcript level"/>
<sequence length="525" mass="58287">MAVWRSCLRASSSRHRLSSLFFSHHLKPSSFISHSPPLFSPSPSPSPTCFSPLHRLLSSGPEFPIGSQEIIPTDDSSLPVLAVVDFLEGFHEFTGLPWWMIIASSTVAVRLALLPLLILQLKKLKTISELLPKLPMPIPETPTLKGSIDQFSHFLKESRAIGCPSFLWFFPYLSVQLPCFFLLMASIRKMSLDGHPGFDSGGVLWFQNLSDLPGGSFGPVFPILIATFHYINIQISFDTSTIRQTTGLTGLLMRYYKLYLEILSVPLFFVGYAIPQGSLVYWVTNSSVNIFQQLSLKHPTVGAKLGLLSQGATPGMGHSMEISESVIKYVDSDSKEQTLSLQTLTPEELLSLSVQVLSKGDKETSIQLLRLALEKDPGYVRGLVLMGQALLQKTQLSEATEYLELAISKLLDEDPSDAEDVELLMLASQWAGAAYVQQGKLKSGIIHLERVAKLREPGDPKSKEHYFEALLLLSSALYKEGQSDEAAKILRVVVDHNPAYKPLLEQCEDENELVSDLVSRRKDHF</sequence>
<feature type="transit peptide" description="Chloroplast" evidence="2">
    <location>
        <begin position="1"/>
        <end status="unknown"/>
    </location>
</feature>
<feature type="chain" id="PRO_0000020367" description="ALBINO3-like protein 2, chloroplastic">
    <location>
        <begin status="unknown"/>
        <end position="525"/>
    </location>
</feature>
<feature type="transmembrane region" description="Helical" evidence="2">
    <location>
        <begin position="99"/>
        <end position="119"/>
    </location>
</feature>
<feature type="transmembrane region" description="Helical" evidence="2">
    <location>
        <begin position="167"/>
        <end position="187"/>
    </location>
</feature>
<feature type="transmembrane region" description="Helical" evidence="2">
    <location>
        <begin position="217"/>
        <end position="237"/>
    </location>
</feature>
<feature type="transmembrane region" description="Helical" evidence="2">
    <location>
        <begin position="262"/>
        <end position="282"/>
    </location>
</feature>
<feature type="repeat" description="TPR 1">
    <location>
        <begin position="346"/>
        <end position="379"/>
    </location>
</feature>
<feature type="repeat" description="TPR 2">
    <location>
        <begin position="380"/>
        <end position="413"/>
    </location>
</feature>
<feature type="repeat" description="TPR 3">
    <location>
        <begin position="425"/>
        <end position="458"/>
    </location>
</feature>
<feature type="repeat" description="TPR 4">
    <location>
        <begin position="467"/>
        <end position="500"/>
    </location>
</feature>
<feature type="sequence conflict" description="In Ref. 3; AAM98153." evidence="3" ref="3">
    <original>H</original>
    <variation>R</variation>
    <location>
        <position position="447"/>
    </location>
</feature>
<reference key="1">
    <citation type="journal article" date="2000" name="Nature">
        <title>Sequence and analysis of chromosome 1 of the plant Arabidopsis thaliana.</title>
        <authorList>
            <person name="Theologis A."/>
            <person name="Ecker J.R."/>
            <person name="Palm C.J."/>
            <person name="Federspiel N.A."/>
            <person name="Kaul S."/>
            <person name="White O."/>
            <person name="Alonso J."/>
            <person name="Altafi H."/>
            <person name="Araujo R."/>
            <person name="Bowman C.L."/>
            <person name="Brooks S.Y."/>
            <person name="Buehler E."/>
            <person name="Chan A."/>
            <person name="Chao Q."/>
            <person name="Chen H."/>
            <person name="Cheuk R.F."/>
            <person name="Chin C.W."/>
            <person name="Chung M.K."/>
            <person name="Conn L."/>
            <person name="Conway A.B."/>
            <person name="Conway A.R."/>
            <person name="Creasy T.H."/>
            <person name="Dewar K."/>
            <person name="Dunn P."/>
            <person name="Etgu P."/>
            <person name="Feldblyum T.V."/>
            <person name="Feng J.-D."/>
            <person name="Fong B."/>
            <person name="Fujii C.Y."/>
            <person name="Gill J.E."/>
            <person name="Goldsmith A.D."/>
            <person name="Haas B."/>
            <person name="Hansen N.F."/>
            <person name="Hughes B."/>
            <person name="Huizar L."/>
            <person name="Hunter J.L."/>
            <person name="Jenkins J."/>
            <person name="Johnson-Hopson C."/>
            <person name="Khan S."/>
            <person name="Khaykin E."/>
            <person name="Kim C.J."/>
            <person name="Koo H.L."/>
            <person name="Kremenetskaia I."/>
            <person name="Kurtz D.B."/>
            <person name="Kwan A."/>
            <person name="Lam B."/>
            <person name="Langin-Hooper S."/>
            <person name="Lee A."/>
            <person name="Lee J.M."/>
            <person name="Lenz C.A."/>
            <person name="Li J.H."/>
            <person name="Li Y.-P."/>
            <person name="Lin X."/>
            <person name="Liu S.X."/>
            <person name="Liu Z.A."/>
            <person name="Luros J.S."/>
            <person name="Maiti R."/>
            <person name="Marziali A."/>
            <person name="Militscher J."/>
            <person name="Miranda M."/>
            <person name="Nguyen M."/>
            <person name="Nierman W.C."/>
            <person name="Osborne B.I."/>
            <person name="Pai G."/>
            <person name="Peterson J."/>
            <person name="Pham P.K."/>
            <person name="Rizzo M."/>
            <person name="Rooney T."/>
            <person name="Rowley D."/>
            <person name="Sakano H."/>
            <person name="Salzberg S.L."/>
            <person name="Schwartz J.R."/>
            <person name="Shinn P."/>
            <person name="Southwick A.M."/>
            <person name="Sun H."/>
            <person name="Tallon L.J."/>
            <person name="Tambunga G."/>
            <person name="Toriumi M.J."/>
            <person name="Town C.D."/>
            <person name="Utterback T."/>
            <person name="Van Aken S."/>
            <person name="Vaysberg M."/>
            <person name="Vysotskaia V.S."/>
            <person name="Walker M."/>
            <person name="Wu D."/>
            <person name="Yu G."/>
            <person name="Fraser C.M."/>
            <person name="Venter J.C."/>
            <person name="Davis R.W."/>
        </authorList>
    </citation>
    <scope>NUCLEOTIDE SEQUENCE [LARGE SCALE GENOMIC DNA]</scope>
    <source>
        <strain>cv. Columbia</strain>
    </source>
</reference>
<reference key="2">
    <citation type="journal article" date="2017" name="Plant J.">
        <title>Araport11: a complete reannotation of the Arabidopsis thaliana reference genome.</title>
        <authorList>
            <person name="Cheng C.Y."/>
            <person name="Krishnakumar V."/>
            <person name="Chan A.P."/>
            <person name="Thibaud-Nissen F."/>
            <person name="Schobel S."/>
            <person name="Town C.D."/>
        </authorList>
    </citation>
    <scope>GENOME REANNOTATION</scope>
    <source>
        <strain>cv. Columbia</strain>
    </source>
</reference>
<reference key="3">
    <citation type="journal article" date="2003" name="Science">
        <title>Empirical analysis of transcriptional activity in the Arabidopsis genome.</title>
        <authorList>
            <person name="Yamada K."/>
            <person name="Lim J."/>
            <person name="Dale J.M."/>
            <person name="Chen H."/>
            <person name="Shinn P."/>
            <person name="Palm C.J."/>
            <person name="Southwick A.M."/>
            <person name="Wu H.C."/>
            <person name="Kim C.J."/>
            <person name="Nguyen M."/>
            <person name="Pham P.K."/>
            <person name="Cheuk R.F."/>
            <person name="Karlin-Newmann G."/>
            <person name="Liu S.X."/>
            <person name="Lam B."/>
            <person name="Sakano H."/>
            <person name="Wu T."/>
            <person name="Yu G."/>
            <person name="Miranda M."/>
            <person name="Quach H.L."/>
            <person name="Tripp M."/>
            <person name="Chang C.H."/>
            <person name="Lee J.M."/>
            <person name="Toriumi M.J."/>
            <person name="Chan M.M."/>
            <person name="Tang C.C."/>
            <person name="Onodera C.S."/>
            <person name="Deng J.M."/>
            <person name="Akiyama K."/>
            <person name="Ansari Y."/>
            <person name="Arakawa T."/>
            <person name="Banh J."/>
            <person name="Banno F."/>
            <person name="Bowser L."/>
            <person name="Brooks S.Y."/>
            <person name="Carninci P."/>
            <person name="Chao Q."/>
            <person name="Choy N."/>
            <person name="Enju A."/>
            <person name="Goldsmith A.D."/>
            <person name="Gurjal M."/>
            <person name="Hansen N.F."/>
            <person name="Hayashizaki Y."/>
            <person name="Johnson-Hopson C."/>
            <person name="Hsuan V.W."/>
            <person name="Iida K."/>
            <person name="Karnes M."/>
            <person name="Khan S."/>
            <person name="Koesema E."/>
            <person name="Ishida J."/>
            <person name="Jiang P.X."/>
            <person name="Jones T."/>
            <person name="Kawai J."/>
            <person name="Kamiya A."/>
            <person name="Meyers C."/>
            <person name="Nakajima M."/>
            <person name="Narusaka M."/>
            <person name="Seki M."/>
            <person name="Sakurai T."/>
            <person name="Satou M."/>
            <person name="Tamse R."/>
            <person name="Vaysberg M."/>
            <person name="Wallender E.K."/>
            <person name="Wong C."/>
            <person name="Yamamura Y."/>
            <person name="Yuan S."/>
            <person name="Shinozaki K."/>
            <person name="Davis R.W."/>
            <person name="Theologis A."/>
            <person name="Ecker J.R."/>
        </authorList>
    </citation>
    <scope>NUCLEOTIDE SEQUENCE [LARGE SCALE MRNA] OF 3-525</scope>
    <source>
        <strain>cv. Columbia</strain>
    </source>
</reference>
<organism>
    <name type="scientific">Arabidopsis thaliana</name>
    <name type="common">Mouse-ear cress</name>
    <dbReference type="NCBI Taxonomy" id="3702"/>
    <lineage>
        <taxon>Eukaryota</taxon>
        <taxon>Viridiplantae</taxon>
        <taxon>Streptophyta</taxon>
        <taxon>Embryophyta</taxon>
        <taxon>Tracheophyta</taxon>
        <taxon>Spermatophyta</taxon>
        <taxon>Magnoliopsida</taxon>
        <taxon>eudicotyledons</taxon>
        <taxon>Gunneridae</taxon>
        <taxon>Pentapetalae</taxon>
        <taxon>rosids</taxon>
        <taxon>malvids</taxon>
        <taxon>Brassicales</taxon>
        <taxon>Brassicaceae</taxon>
        <taxon>Camelineae</taxon>
        <taxon>Arabidopsis</taxon>
    </lineage>
</organism>
<keyword id="KW-0150">Chloroplast</keyword>
<keyword id="KW-0472">Membrane</keyword>
<keyword id="KW-0934">Plastid</keyword>
<keyword id="KW-1185">Reference proteome</keyword>
<keyword id="KW-0677">Repeat</keyword>
<keyword id="KW-0793">Thylakoid</keyword>
<keyword id="KW-0802">TPR repeat</keyword>
<keyword id="KW-0809">Transit peptide</keyword>
<keyword id="KW-0812">Transmembrane</keyword>
<keyword id="KW-1133">Transmembrane helix</keyword>
<evidence type="ECO:0000250" key="1"/>
<evidence type="ECO:0000255" key="2"/>
<evidence type="ECO:0000305" key="3"/>